<name>PPAT_HUMAN</name>
<gene>
    <name evidence="9" type="primary">ACP4</name>
    <name evidence="6 9" type="synonym">ACPT</name>
</gene>
<reference key="1">
    <citation type="journal article" date="2001" name="Genomics">
        <title>Molecular cloning of a novel human acid phosphatase gene (ACPT) that is highly expressed in the testis.</title>
        <authorList>
            <person name="Yousef G.M."/>
            <person name="Diamandis M."/>
            <person name="Jung K."/>
            <person name="Diamandis E.P."/>
        </authorList>
    </citation>
    <scope>NUCLEOTIDE SEQUENCE [GENOMIC DNA] (ISOFORMS 1; 2 AND 3)</scope>
    <scope>INDUCTION</scope>
    <scope>TISSUE SPECIFICITY</scope>
</reference>
<reference key="2">
    <citation type="journal article" date="2004" name="Neuroscience">
        <title>Regulation of ErbB4 phosphorylation and cleavage by a novel histidine acid phosphatase.</title>
        <authorList>
            <person name="Fleisig H."/>
            <person name="El-Din El-Husseini A."/>
            <person name="Vincent S.R."/>
        </authorList>
    </citation>
    <scope>NUCLEOTIDE SEQUENCE [MRNA]</scope>
    <scope>FUNCTION</scope>
    <scope>SUBUNIT</scope>
    <scope>GLYCOSYLATION</scope>
    <source>
        <tissue>Testis</tissue>
    </source>
</reference>
<reference key="3">
    <citation type="journal article" date="2016" name="Am. J. Hum. Genet.">
        <title>Recessive mutations in ACPT, encoding testicular acid phosphatase, cause hypoplastic amelogenesis imperfecta.</title>
        <authorList>
            <person name="Seymen F."/>
            <person name="Kim Y.J."/>
            <person name="Lee Y.J."/>
            <person name="Kang J."/>
            <person name="Kim T.H."/>
            <person name="Choi H."/>
            <person name="Koruyucu M."/>
            <person name="Kasimoglu Y."/>
            <person name="Tuna E.B."/>
            <person name="Gencay K."/>
            <person name="Shin T.J."/>
            <person name="Hyun H.K."/>
            <person name="Kim Y.J."/>
            <person name="Lee S.H."/>
            <person name="Lee Z.H."/>
            <person name="Zhang H."/>
            <person name="Hu J.C."/>
            <person name="Simmer J.P."/>
            <person name="Cho E.S."/>
            <person name="Kim J.W."/>
        </authorList>
    </citation>
    <scope>INVOLVEMENT IN AI1J</scope>
    <scope>VARIANTS AI1J CYS-76; CYS-111; PRO-128; LYS-133 AND LEU-238</scope>
    <scope>FUNCTION</scope>
</reference>
<feature type="signal peptide" evidence="2">
    <location>
        <begin position="1"/>
        <end position="26"/>
    </location>
</feature>
<feature type="chain" id="PRO_0000259643" description="Testicular acid phosphatase">
    <location>
        <begin position="27"/>
        <end position="426"/>
    </location>
</feature>
<feature type="topological domain" description="Extracellular" evidence="2">
    <location>
        <begin position="27"/>
        <end position="393"/>
    </location>
</feature>
<feature type="transmembrane region" description="Helical" evidence="2">
    <location>
        <begin position="394"/>
        <end position="414"/>
    </location>
</feature>
<feature type="topological domain" description="Cytoplasmic" evidence="2">
    <location>
        <begin position="415"/>
        <end position="426"/>
    </location>
</feature>
<feature type="active site" description="Nucleophile" evidence="1">
    <location>
        <position position="41"/>
    </location>
</feature>
<feature type="active site" description="Proton donor" evidence="1">
    <location>
        <position position="289"/>
    </location>
</feature>
<feature type="glycosylation site" description="N-linked (GlcNAc...) asparagine" evidence="2">
    <location>
        <position position="191"/>
    </location>
</feature>
<feature type="glycosylation site" description="N-linked (GlcNAc...) asparagine" evidence="2">
    <location>
        <position position="269"/>
    </location>
</feature>
<feature type="glycosylation site" description="N-linked (GlcNAc...) asparagine" evidence="2">
    <location>
        <position position="330"/>
    </location>
</feature>
<feature type="glycosylation site" description="N-linked (GlcNAc...) asparagine" evidence="2">
    <location>
        <position position="339"/>
    </location>
</feature>
<feature type="disulfide bond" evidence="1">
    <location>
        <begin position="159"/>
        <end position="378"/>
    </location>
</feature>
<feature type="disulfide bond" evidence="1">
    <location>
        <begin position="214"/>
        <end position="312"/>
    </location>
</feature>
<feature type="disulfide bond" evidence="1">
    <location>
        <begin position="353"/>
        <end position="357"/>
    </location>
</feature>
<feature type="splice variant" id="VSP_021493" description="In isoform 3." evidence="7">
    <original>FRHGDRAPLASYPMDPHKEVASTLWPRGLGQLTTEGVRQQLELGRFLRSRYEAF</original>
    <variation>RRPHPGLPLAPPGLALTSPVPRYSAMATGPRWPPTPWTHTRRWPPPCGHEAWAS</variation>
    <location>
        <begin position="39"/>
        <end position="92"/>
    </location>
</feature>
<feature type="splice variant" id="VSP_021494" description="In isoform 2." evidence="7">
    <location>
        <begin position="91"/>
        <end position="183"/>
    </location>
</feature>
<feature type="splice variant" id="VSP_021495" description="In isoform 3." evidence="7">
    <location>
        <begin position="93"/>
        <end position="426"/>
    </location>
</feature>
<feature type="sequence variant" id="VAR_078014" description="In AI1J; dbSNP:rs1057519277 and dbSNP:rs902112287." evidence="5">
    <original>R</original>
    <variation>C</variation>
    <location>
        <position position="76"/>
    </location>
</feature>
<feature type="sequence variant" id="VAR_078015" description="In AI1J; dbSNP:rs202073531." evidence="5">
    <original>R</original>
    <variation>C</variation>
    <location>
        <position position="111"/>
    </location>
</feature>
<feature type="sequence variant" id="VAR_078016" description="In AI1J; uncertain significance; dbSNP:rs767907487." evidence="5">
    <original>A</original>
    <variation>P</variation>
    <location>
        <position position="128"/>
    </location>
</feature>
<feature type="sequence variant" id="VAR_078017" description="In AI1J; uncertain significance; dbSNP:rs779823931." evidence="5">
    <original>E</original>
    <variation>K</variation>
    <location>
        <position position="133"/>
    </location>
</feature>
<feature type="sequence variant" id="VAR_078018" description="In AI1J; dbSNP:rs763573828." evidence="5">
    <original>S</original>
    <variation>L</variation>
    <location>
        <position position="238"/>
    </location>
</feature>
<accession>Q9BZG2</accession>
<accession>C0H3P7</accession>
<accession>Q9BZG3</accession>
<accession>Q9BZG4</accession>
<dbReference type="EC" id="3.1.3.2"/>
<dbReference type="EMBL" id="AF321918">
    <property type="protein sequence ID" value="AAK09393.1"/>
    <property type="molecule type" value="Genomic_DNA"/>
</dbReference>
<dbReference type="EMBL" id="AF321918">
    <property type="protein sequence ID" value="AAK09394.1"/>
    <property type="molecule type" value="Genomic_DNA"/>
</dbReference>
<dbReference type="EMBL" id="AF321918">
    <property type="protein sequence ID" value="AAK09395.1"/>
    <property type="molecule type" value="Genomic_DNA"/>
</dbReference>
<dbReference type="EMBL" id="AF321918">
    <property type="protein sequence ID" value="AAK09396.1"/>
    <property type="molecule type" value="Genomic_DNA"/>
</dbReference>
<dbReference type="CCDS" id="CCDS12802.1">
    <molecule id="Q9BZG2-1"/>
</dbReference>
<dbReference type="RefSeq" id="NP_149059.1">
    <molecule id="Q9BZG2-1"/>
    <property type="nucleotide sequence ID" value="NM_033068.3"/>
</dbReference>
<dbReference type="SMR" id="Q9BZG2"/>
<dbReference type="BioGRID" id="125045">
    <property type="interactions" value="124"/>
</dbReference>
<dbReference type="FunCoup" id="Q9BZG2">
    <property type="interactions" value="12"/>
</dbReference>
<dbReference type="STRING" id="9606.ENSP00000270593"/>
<dbReference type="DEPOD" id="ACP4"/>
<dbReference type="GlyCosmos" id="Q9BZG2">
    <property type="glycosylation" value="4 sites, No reported glycans"/>
</dbReference>
<dbReference type="GlyGen" id="Q9BZG2">
    <property type="glycosylation" value="4 sites"/>
</dbReference>
<dbReference type="iPTMnet" id="Q9BZG2"/>
<dbReference type="PhosphoSitePlus" id="Q9BZG2"/>
<dbReference type="BioMuta" id="ACP4"/>
<dbReference type="DMDM" id="74717749"/>
<dbReference type="MassIVE" id="Q9BZG2"/>
<dbReference type="PaxDb" id="9606-ENSP00000270593"/>
<dbReference type="PeptideAtlas" id="Q9BZG2"/>
<dbReference type="ProteomicsDB" id="79839">
    <molecule id="Q9BZG2-1"/>
</dbReference>
<dbReference type="TopDownProteomics" id="Q9BZG2-2">
    <molecule id="Q9BZG2-2"/>
</dbReference>
<dbReference type="Antibodypedia" id="32366">
    <property type="antibodies" value="77 antibodies from 20 providers"/>
</dbReference>
<dbReference type="DNASU" id="93650"/>
<dbReference type="Ensembl" id="ENST00000270593.2">
    <molecule id="Q9BZG2-1"/>
    <property type="protein sequence ID" value="ENSP00000270593.1"/>
    <property type="gene ID" value="ENSG00000142513.6"/>
</dbReference>
<dbReference type="GeneID" id="93650"/>
<dbReference type="KEGG" id="hsa:93650"/>
<dbReference type="MANE-Select" id="ENST00000270593.2">
    <property type="protein sequence ID" value="ENSP00000270593.1"/>
    <property type="RefSeq nucleotide sequence ID" value="NM_033068.3"/>
    <property type="RefSeq protein sequence ID" value="NP_149059.1"/>
</dbReference>
<dbReference type="UCSC" id="uc002pta.1">
    <molecule id="Q9BZG2-1"/>
    <property type="organism name" value="human"/>
</dbReference>
<dbReference type="AGR" id="HGNC:14376"/>
<dbReference type="CTD" id="93650"/>
<dbReference type="DisGeNET" id="93650"/>
<dbReference type="GeneCards" id="ACP4"/>
<dbReference type="HGNC" id="HGNC:14376">
    <property type="gene designation" value="ACP4"/>
</dbReference>
<dbReference type="HPA" id="ENSG00000142513">
    <property type="expression patterns" value="Group enriched (skin, testis)"/>
</dbReference>
<dbReference type="MalaCards" id="ACP4"/>
<dbReference type="MIM" id="606362">
    <property type="type" value="gene"/>
</dbReference>
<dbReference type="MIM" id="617297">
    <property type="type" value="phenotype"/>
</dbReference>
<dbReference type="neXtProt" id="NX_Q9BZG2"/>
<dbReference type="OpenTargets" id="ENSG00000142513"/>
<dbReference type="Orphanet" id="100031">
    <property type="disease" value="Hypoplastic amelogenesis imperfecta"/>
</dbReference>
<dbReference type="PharmGKB" id="PA24450"/>
<dbReference type="VEuPathDB" id="HostDB:ENSG00000142513"/>
<dbReference type="eggNOG" id="KOG3720">
    <property type="taxonomic scope" value="Eukaryota"/>
</dbReference>
<dbReference type="GeneTree" id="ENSGT00940000161433"/>
<dbReference type="HOGENOM" id="CLU_030431_1_1_1"/>
<dbReference type="InParanoid" id="Q9BZG2"/>
<dbReference type="OMA" id="VPCHGSR"/>
<dbReference type="OrthoDB" id="258392at2759"/>
<dbReference type="PAN-GO" id="Q9BZG2">
    <property type="GO annotations" value="9 GO annotations based on evolutionary models"/>
</dbReference>
<dbReference type="PhylomeDB" id="Q9BZG2"/>
<dbReference type="TreeFam" id="TF312893"/>
<dbReference type="PathwayCommons" id="Q9BZG2"/>
<dbReference type="BioGRID-ORCS" id="93650">
    <property type="hits" value="19 hits in 1151 CRISPR screens"/>
</dbReference>
<dbReference type="GenomeRNAi" id="93650"/>
<dbReference type="Pharos" id="Q9BZG2">
    <property type="development level" value="Tbio"/>
</dbReference>
<dbReference type="PRO" id="PR:Q9BZG2"/>
<dbReference type="Proteomes" id="UP000005640">
    <property type="component" value="Chromosome 19"/>
</dbReference>
<dbReference type="RNAct" id="Q9BZG2">
    <property type="molecule type" value="protein"/>
</dbReference>
<dbReference type="Bgee" id="ENSG00000142513">
    <property type="expression patterns" value="Expressed in tendon of biceps brachii and 76 other cell types or tissues"/>
</dbReference>
<dbReference type="GO" id="GO:0098978">
    <property type="term" value="C:glutamatergic synapse"/>
    <property type="evidence" value="ECO:0007669"/>
    <property type="project" value="Ensembl"/>
</dbReference>
<dbReference type="GO" id="GO:0005764">
    <property type="term" value="C:lysosome"/>
    <property type="evidence" value="ECO:0000318"/>
    <property type="project" value="GO_Central"/>
</dbReference>
<dbReference type="GO" id="GO:0045211">
    <property type="term" value="C:postsynaptic membrane"/>
    <property type="evidence" value="ECO:0000318"/>
    <property type="project" value="GO_Central"/>
</dbReference>
<dbReference type="GO" id="GO:0003993">
    <property type="term" value="F:acid phosphatase activity"/>
    <property type="evidence" value="ECO:0000318"/>
    <property type="project" value="GO_Central"/>
</dbReference>
<dbReference type="GO" id="GO:0004725">
    <property type="term" value="F:protein tyrosine phosphatase activity"/>
    <property type="evidence" value="ECO:0000314"/>
    <property type="project" value="UniProtKB"/>
</dbReference>
<dbReference type="GO" id="GO:0030971">
    <property type="term" value="F:receptor tyrosine kinase binding"/>
    <property type="evidence" value="ECO:0000314"/>
    <property type="project" value="UniProtKB"/>
</dbReference>
<dbReference type="GO" id="GO:0120154">
    <property type="term" value="P:negative regulation of ERBB4 signaling pathway"/>
    <property type="evidence" value="ECO:0000314"/>
    <property type="project" value="UniProtKB"/>
</dbReference>
<dbReference type="GO" id="GO:0010977">
    <property type="term" value="P:negative regulation of neuron projection development"/>
    <property type="evidence" value="ECO:0000314"/>
    <property type="project" value="UniProtKB"/>
</dbReference>
<dbReference type="GO" id="GO:0010955">
    <property type="term" value="P:negative regulation of protein processing"/>
    <property type="evidence" value="ECO:0000315"/>
    <property type="project" value="UniProtKB"/>
</dbReference>
<dbReference type="GO" id="GO:0042476">
    <property type="term" value="P:odontogenesis"/>
    <property type="evidence" value="ECO:0000315"/>
    <property type="project" value="UniProtKB"/>
</dbReference>
<dbReference type="GO" id="GO:1990264">
    <property type="term" value="P:peptidyl-tyrosine dephosphorylation involved in inactivation of protein kinase activity"/>
    <property type="evidence" value="ECO:0000314"/>
    <property type="project" value="UniProtKB"/>
</dbReference>
<dbReference type="GO" id="GO:0048168">
    <property type="term" value="P:regulation of neuronal synaptic plasticity"/>
    <property type="evidence" value="ECO:0000314"/>
    <property type="project" value="UniProtKB"/>
</dbReference>
<dbReference type="CDD" id="cd07061">
    <property type="entry name" value="HP_HAP_like"/>
    <property type="match status" value="1"/>
</dbReference>
<dbReference type="FunFam" id="3.40.50.1240:FF:000010">
    <property type="entry name" value="Prostatic acid phosphatase"/>
    <property type="match status" value="1"/>
</dbReference>
<dbReference type="Gene3D" id="3.40.50.1240">
    <property type="entry name" value="Phosphoglycerate mutase-like"/>
    <property type="match status" value="1"/>
</dbReference>
<dbReference type="InterPro" id="IPR033379">
    <property type="entry name" value="Acid_Pase_AS"/>
</dbReference>
<dbReference type="InterPro" id="IPR000560">
    <property type="entry name" value="His_Pase_clade-2"/>
</dbReference>
<dbReference type="InterPro" id="IPR029033">
    <property type="entry name" value="His_PPase_superfam"/>
</dbReference>
<dbReference type="InterPro" id="IPR050645">
    <property type="entry name" value="Histidine_acid_phosphatase"/>
</dbReference>
<dbReference type="PANTHER" id="PTHR11567">
    <property type="entry name" value="ACID PHOSPHATASE-RELATED"/>
    <property type="match status" value="1"/>
</dbReference>
<dbReference type="PANTHER" id="PTHR11567:SF145">
    <property type="entry name" value="TESTICULAR ACID PHOSPHATASE"/>
    <property type="match status" value="1"/>
</dbReference>
<dbReference type="Pfam" id="PF00328">
    <property type="entry name" value="His_Phos_2"/>
    <property type="match status" value="1"/>
</dbReference>
<dbReference type="SUPFAM" id="SSF53254">
    <property type="entry name" value="Phosphoglycerate mutase-like"/>
    <property type="match status" value="1"/>
</dbReference>
<dbReference type="PROSITE" id="PS00616">
    <property type="entry name" value="HIS_ACID_PHOSPHAT_1"/>
    <property type="match status" value="1"/>
</dbReference>
<dbReference type="PROSITE" id="PS00778">
    <property type="entry name" value="HIS_ACID_PHOSPHAT_2"/>
    <property type="match status" value="1"/>
</dbReference>
<protein>
    <recommendedName>
        <fullName evidence="7">Testicular acid phosphatase</fullName>
        <ecNumber>3.1.3.2</ecNumber>
    </recommendedName>
    <alternativeName>
        <fullName evidence="9">Acid phosphatase 4</fullName>
    </alternativeName>
</protein>
<comment type="function">
    <text evidence="4 5">May dephosphorylate receptor tyrosine-protein kinase ERBB4 and inhibits its ligand-induced proteolytic cleavage (PubMed:15219672). May play a role in odontogenesis (PubMed:27843125).</text>
</comment>
<comment type="catalytic activity">
    <reaction>
        <text>a phosphate monoester + H2O = an alcohol + phosphate</text>
        <dbReference type="Rhea" id="RHEA:15017"/>
        <dbReference type="ChEBI" id="CHEBI:15377"/>
        <dbReference type="ChEBI" id="CHEBI:30879"/>
        <dbReference type="ChEBI" id="CHEBI:43474"/>
        <dbReference type="ChEBI" id="CHEBI:67140"/>
        <dbReference type="EC" id="3.1.3.2"/>
    </reaction>
</comment>
<comment type="subunit">
    <text evidence="8">Homodimer.</text>
</comment>
<comment type="subcellular location">
    <subcellularLocation>
        <location evidence="2">Membrane</location>
        <topology evidence="2">Single-pass type I membrane protein</topology>
    </subcellularLocation>
</comment>
<comment type="alternative products">
    <event type="alternative splicing"/>
    <isoform>
        <id>Q9BZG2-1</id>
        <name>1</name>
        <sequence type="displayed"/>
    </isoform>
    <isoform>
        <id>Q9BZG2-2</id>
        <name>2</name>
        <name>Variant 3</name>
        <sequence type="described" ref="VSP_021494"/>
    </isoform>
    <isoform>
        <id>Q9BZG2-3</id>
        <name>3</name>
        <name>Truncated variant 1</name>
        <name>Truncated variant 2</name>
        <sequence type="described" ref="VSP_021493 VSP_021495"/>
    </isoform>
</comment>
<comment type="tissue specificity">
    <text evidence="3">Expressed mainly in the testis. Also expressed in the brain where they are enriched at the postsynaptic sites. Expressed at lower levels in the trachea, prostate, bone marrow, spinal cord, colon, fetal brain, heart, thymus, fetal liver, spleen, leukocytes, ovary, small intestine, pancreas and skeletal muscle. Expression is significantly lower in testicular cancer tissues than in normal testicular tissues. Isoform 3 is expressed in the testis, trachea, prostate and bone marrow.</text>
</comment>
<comment type="induction">
    <text evidence="3">Up-regulated by mibolerone (a synthetic androgen) and dihydrotestosterone (DHT) and is down-regulated by estrogen and progestin.</text>
</comment>
<comment type="PTM">
    <text evidence="8">Glycosylated.</text>
</comment>
<comment type="disease" evidence="5">
    <disease id="DI-04931">
        <name>Amelogenesis imperfecta 1J</name>
        <acronym>AI1J</acronym>
        <description>A form of amelogenesis imperfecta, a disorder characterized by defective enamel formation. The enamel may be hypoplastic, hypomineralized or both, and affected teeth may be discoloured, sensitive or prone to disintegration. AI1J is an autosomal recessive form characterized by hypoplastic enamel, enamel discolorization ranging from yellow to black, and normal dentin.</description>
        <dbReference type="MIM" id="617297"/>
    </disease>
    <text>The disease is caused by variants affecting the gene represented in this entry.</text>
</comment>
<comment type="similarity">
    <text evidence="7">Belongs to the histidine acid phosphatase family.</text>
</comment>
<organism>
    <name type="scientific">Homo sapiens</name>
    <name type="common">Human</name>
    <dbReference type="NCBI Taxonomy" id="9606"/>
    <lineage>
        <taxon>Eukaryota</taxon>
        <taxon>Metazoa</taxon>
        <taxon>Chordata</taxon>
        <taxon>Craniata</taxon>
        <taxon>Vertebrata</taxon>
        <taxon>Euteleostomi</taxon>
        <taxon>Mammalia</taxon>
        <taxon>Eutheria</taxon>
        <taxon>Euarchontoglires</taxon>
        <taxon>Primates</taxon>
        <taxon>Haplorrhini</taxon>
        <taxon>Catarrhini</taxon>
        <taxon>Hominidae</taxon>
        <taxon>Homo</taxon>
    </lineage>
</organism>
<evidence type="ECO:0000250" key="1">
    <source>
        <dbReference type="UniProtKB" id="P15309"/>
    </source>
</evidence>
<evidence type="ECO:0000255" key="2"/>
<evidence type="ECO:0000269" key="3">
    <source>
    </source>
</evidence>
<evidence type="ECO:0000269" key="4">
    <source>
    </source>
</evidence>
<evidence type="ECO:0000269" key="5">
    <source>
    </source>
</evidence>
<evidence type="ECO:0000303" key="6">
    <source>
    </source>
</evidence>
<evidence type="ECO:0000305" key="7"/>
<evidence type="ECO:0000305" key="8">
    <source>
    </source>
</evidence>
<evidence type="ECO:0000312" key="9">
    <source>
        <dbReference type="HGNC" id="HGNC:14376"/>
    </source>
</evidence>
<keyword id="KW-0025">Alternative splicing</keyword>
<keyword id="KW-0986">Amelogenesis imperfecta</keyword>
<keyword id="KW-0225">Disease variant</keyword>
<keyword id="KW-1015">Disulfide bond</keyword>
<keyword id="KW-0325">Glycoprotein</keyword>
<keyword id="KW-0378">Hydrolase</keyword>
<keyword id="KW-0472">Membrane</keyword>
<keyword id="KW-1267">Proteomics identification</keyword>
<keyword id="KW-1185">Reference proteome</keyword>
<keyword id="KW-0732">Signal</keyword>
<keyword id="KW-0812">Transmembrane</keyword>
<keyword id="KW-1133">Transmembrane helix</keyword>
<sequence length="426" mass="46090">MAGLGFWGHPAGPLLLLLLLVLPPRALPEGPLVFVALVFRHGDRAPLASYPMDPHKEVASTLWPRGLGQLTTEGVRQQLELGRFLRSRYEAFLSPEYRREEVYIRSTDFDRTLESAQANLAGLFPEAAPGSPEARWRPIPVHTVPVAEDKLLRFPMRSCPRYHELLREATEAAEYQEALEGWTGFLSRLENFTGLSLVGEPLRRAWKVLDTLMCQQAHGLPLPAWASPDVLRTLAQISALDIGAHVGPPRAAEKAQLTGGILLNAILANFSRVQRLGLPLKMVMYSAHDSTLLALQGALGLYDGHTPPYAACLGFEFRKHLGNPAKDGGNVTVSLFYRNDSAHLPLPLSLPGCPAPCPLGRFYQLTAPARPPAHGVSCHGPYEAAIPPAPVVPLLAGAVAVLVALSLGLGLLAWRPGCLRALGGPV</sequence>
<proteinExistence type="evidence at protein level"/>